<name>RSMG_SYNS3</name>
<organism>
    <name type="scientific">Synechococcus sp. (strain CC9311)</name>
    <dbReference type="NCBI Taxonomy" id="64471"/>
    <lineage>
        <taxon>Bacteria</taxon>
        <taxon>Bacillati</taxon>
        <taxon>Cyanobacteriota</taxon>
        <taxon>Cyanophyceae</taxon>
        <taxon>Synechococcales</taxon>
        <taxon>Synechococcaceae</taxon>
        <taxon>Synechococcus</taxon>
    </lineage>
</organism>
<feature type="chain" id="PRO_0000335436" description="Ribosomal RNA small subunit methyltransferase G">
    <location>
        <begin position="1"/>
        <end position="254"/>
    </location>
</feature>
<feature type="binding site" evidence="1">
    <location>
        <position position="84"/>
    </location>
    <ligand>
        <name>S-adenosyl-L-methionine</name>
        <dbReference type="ChEBI" id="CHEBI:59789"/>
    </ligand>
</feature>
<feature type="binding site" evidence="1">
    <location>
        <position position="89"/>
    </location>
    <ligand>
        <name>S-adenosyl-L-methionine</name>
        <dbReference type="ChEBI" id="CHEBI:59789"/>
    </ligand>
</feature>
<feature type="binding site" evidence="1">
    <location>
        <begin position="136"/>
        <end position="137"/>
    </location>
    <ligand>
        <name>S-adenosyl-L-methionine</name>
        <dbReference type="ChEBI" id="CHEBI:59789"/>
    </ligand>
</feature>
<feature type="binding site" evidence="1">
    <location>
        <position position="155"/>
    </location>
    <ligand>
        <name>S-adenosyl-L-methionine</name>
        <dbReference type="ChEBI" id="CHEBI:59789"/>
    </ligand>
</feature>
<protein>
    <recommendedName>
        <fullName evidence="1">Ribosomal RNA small subunit methyltransferase G</fullName>
        <ecNumber evidence="1">2.1.1.-</ecNumber>
    </recommendedName>
    <alternativeName>
        <fullName evidence="1">16S rRNA 7-methylguanosine methyltransferase</fullName>
        <shortName evidence="1">16S rRNA m7G methyltransferase</shortName>
    </alternativeName>
</protein>
<proteinExistence type="inferred from homology"/>
<gene>
    <name evidence="1" type="primary">rsmG</name>
    <name type="ordered locus">sync_2346</name>
</gene>
<comment type="function">
    <text evidence="1">Specifically methylates the N7 position of a guanine in 16S rRNA.</text>
</comment>
<comment type="subcellular location">
    <subcellularLocation>
        <location evidence="1">Cytoplasm</location>
    </subcellularLocation>
</comment>
<comment type="similarity">
    <text evidence="1">Belongs to the methyltransferase superfamily. RNA methyltransferase RsmG family.</text>
</comment>
<dbReference type="EC" id="2.1.1.-" evidence="1"/>
<dbReference type="EMBL" id="CP000435">
    <property type="protein sequence ID" value="ABI47838.1"/>
    <property type="molecule type" value="Genomic_DNA"/>
</dbReference>
<dbReference type="RefSeq" id="WP_011620254.1">
    <property type="nucleotide sequence ID" value="NC_008319.1"/>
</dbReference>
<dbReference type="SMR" id="Q0I7M9"/>
<dbReference type="STRING" id="64471.sync_2346"/>
<dbReference type="KEGG" id="syg:sync_2346"/>
<dbReference type="eggNOG" id="COG0357">
    <property type="taxonomic scope" value="Bacteria"/>
</dbReference>
<dbReference type="HOGENOM" id="CLU_065341_0_2_3"/>
<dbReference type="OrthoDB" id="9808773at2"/>
<dbReference type="Proteomes" id="UP000001961">
    <property type="component" value="Chromosome"/>
</dbReference>
<dbReference type="GO" id="GO:0005829">
    <property type="term" value="C:cytosol"/>
    <property type="evidence" value="ECO:0007669"/>
    <property type="project" value="TreeGrafter"/>
</dbReference>
<dbReference type="GO" id="GO:0070043">
    <property type="term" value="F:rRNA (guanine-N7-)-methyltransferase activity"/>
    <property type="evidence" value="ECO:0007669"/>
    <property type="project" value="UniProtKB-UniRule"/>
</dbReference>
<dbReference type="Gene3D" id="3.40.50.150">
    <property type="entry name" value="Vaccinia Virus protein VP39"/>
    <property type="match status" value="1"/>
</dbReference>
<dbReference type="HAMAP" id="MF_00074">
    <property type="entry name" value="16SrRNA_methyltr_G"/>
    <property type="match status" value="1"/>
</dbReference>
<dbReference type="InterPro" id="IPR003682">
    <property type="entry name" value="rRNA_ssu_MeTfrase_G"/>
</dbReference>
<dbReference type="InterPro" id="IPR029063">
    <property type="entry name" value="SAM-dependent_MTases_sf"/>
</dbReference>
<dbReference type="NCBIfam" id="TIGR00138">
    <property type="entry name" value="rsmG_gidB"/>
    <property type="match status" value="1"/>
</dbReference>
<dbReference type="PANTHER" id="PTHR31760">
    <property type="entry name" value="S-ADENOSYL-L-METHIONINE-DEPENDENT METHYLTRANSFERASES SUPERFAMILY PROTEIN"/>
    <property type="match status" value="1"/>
</dbReference>
<dbReference type="PANTHER" id="PTHR31760:SF0">
    <property type="entry name" value="S-ADENOSYL-L-METHIONINE-DEPENDENT METHYLTRANSFERASES SUPERFAMILY PROTEIN"/>
    <property type="match status" value="1"/>
</dbReference>
<dbReference type="Pfam" id="PF02527">
    <property type="entry name" value="GidB"/>
    <property type="match status" value="1"/>
</dbReference>
<dbReference type="PIRSF" id="PIRSF003078">
    <property type="entry name" value="GidB"/>
    <property type="match status" value="1"/>
</dbReference>
<dbReference type="SUPFAM" id="SSF53335">
    <property type="entry name" value="S-adenosyl-L-methionine-dependent methyltransferases"/>
    <property type="match status" value="1"/>
</dbReference>
<keyword id="KW-0963">Cytoplasm</keyword>
<keyword id="KW-0489">Methyltransferase</keyword>
<keyword id="KW-1185">Reference proteome</keyword>
<keyword id="KW-0698">rRNA processing</keyword>
<keyword id="KW-0949">S-adenosyl-L-methionine</keyword>
<keyword id="KW-0808">Transferase</keyword>
<sequence length="254" mass="27932">MPEANTFSDAGPDLWQCLGWQPNENQLSQLKELQALLRHWNSRVNLTRLVENEEFWIAQVFDSLWPLEKELRTPDLTRRCIDVGTGGGFPGLAVAIALPGTSLTLVDSVGRKTAAVESMANALGLGTRVDVRTERVEVTGQKRSCRGTFDLAMARAVATPPVVAEYLVPLLAHQGQALLYRGHWSNDDEANLKRALVPLKAKLADCKQINLPAGRGLRTLIRIESIAPCPKSYPRPVGLPNRLPLGNQADDKRS</sequence>
<accession>Q0I7M9</accession>
<reference key="1">
    <citation type="journal article" date="2006" name="Proc. Natl. Acad. Sci. U.S.A.">
        <title>Genome sequence of Synechococcus CC9311: insights into adaptation to a coastal environment.</title>
        <authorList>
            <person name="Palenik B."/>
            <person name="Ren Q."/>
            <person name="Dupont C.L."/>
            <person name="Myers G.S."/>
            <person name="Heidelberg J.F."/>
            <person name="Badger J.H."/>
            <person name="Madupu R."/>
            <person name="Nelson W.C."/>
            <person name="Brinkac L.M."/>
            <person name="Dodson R.J."/>
            <person name="Durkin A.S."/>
            <person name="Daugherty S.C."/>
            <person name="Sullivan S.A."/>
            <person name="Khouri H."/>
            <person name="Mohamoud Y."/>
            <person name="Halpin R."/>
            <person name="Paulsen I.T."/>
        </authorList>
    </citation>
    <scope>NUCLEOTIDE SEQUENCE [LARGE SCALE GENOMIC DNA]</scope>
    <source>
        <strain>CC9311</strain>
    </source>
</reference>
<evidence type="ECO:0000255" key="1">
    <source>
        <dbReference type="HAMAP-Rule" id="MF_00074"/>
    </source>
</evidence>